<organism>
    <name type="scientific">Oceanobacillus iheyensis (strain DSM 14371 / CIP 107618 / JCM 11309 / KCTC 3954 / HTE831)</name>
    <dbReference type="NCBI Taxonomy" id="221109"/>
    <lineage>
        <taxon>Bacteria</taxon>
        <taxon>Bacillati</taxon>
        <taxon>Bacillota</taxon>
        <taxon>Bacilli</taxon>
        <taxon>Bacillales</taxon>
        <taxon>Bacillaceae</taxon>
        <taxon>Oceanobacillus</taxon>
    </lineage>
</organism>
<keyword id="KW-0028">Amino-acid biosynthesis</keyword>
<keyword id="KW-0057">Aromatic amino acid biosynthesis</keyword>
<keyword id="KW-0170">Cobalt</keyword>
<keyword id="KW-0963">Cytoplasm</keyword>
<keyword id="KW-0456">Lyase</keyword>
<keyword id="KW-0479">Metal-binding</keyword>
<keyword id="KW-0520">NAD</keyword>
<keyword id="KW-0547">Nucleotide-binding</keyword>
<keyword id="KW-1185">Reference proteome</keyword>
<keyword id="KW-0862">Zinc</keyword>
<sequence>MEEMTVQSNQSSYPIYIGQGLRYQLSSYIEKKYTKLFIITDDQVGSRYLKDVLHGYPSEENICHFTIPSGESSKSIDNFYRLQTEALQNGLDRHSLIIALGGGVVGDLAGLVAATFMRGIDYIQVPTTILAHDSSVGGKVAINHHLGKNLIGSFFPPVAVIYDIETLSTLPPHEIRSGYAEIVKEGLIANQKMFLSLLDHSLASIKPHQLEIYLKAGIQVKSRIVEQDEKEANIRKFLNLGHTLGHALETIHGYGNITHGEAVANGLLFALHVSEYEFEIQLPFYQLYQWLKDNEYPILSFSEEEITQLIELMKTDKKSVGGTIQMVLLKEVEDPVTVSLDNSMMKQHLSTYLERMEKL</sequence>
<evidence type="ECO:0000255" key="1">
    <source>
        <dbReference type="HAMAP-Rule" id="MF_00110"/>
    </source>
</evidence>
<proteinExistence type="inferred from homology"/>
<feature type="chain" id="PRO_0000140762" description="3-dehydroquinate synthase">
    <location>
        <begin position="1"/>
        <end position="359"/>
    </location>
</feature>
<feature type="binding site" evidence="1">
    <location>
        <begin position="69"/>
        <end position="74"/>
    </location>
    <ligand>
        <name>NAD(+)</name>
        <dbReference type="ChEBI" id="CHEBI:57540"/>
    </ligand>
</feature>
<feature type="binding site" evidence="1">
    <location>
        <begin position="103"/>
        <end position="107"/>
    </location>
    <ligand>
        <name>NAD(+)</name>
        <dbReference type="ChEBI" id="CHEBI:57540"/>
    </ligand>
</feature>
<feature type="binding site" evidence="1">
    <location>
        <begin position="127"/>
        <end position="128"/>
    </location>
    <ligand>
        <name>NAD(+)</name>
        <dbReference type="ChEBI" id="CHEBI:57540"/>
    </ligand>
</feature>
<feature type="binding site" evidence="1">
    <location>
        <position position="139"/>
    </location>
    <ligand>
        <name>NAD(+)</name>
        <dbReference type="ChEBI" id="CHEBI:57540"/>
    </ligand>
</feature>
<feature type="binding site" evidence="1">
    <location>
        <position position="148"/>
    </location>
    <ligand>
        <name>NAD(+)</name>
        <dbReference type="ChEBI" id="CHEBI:57540"/>
    </ligand>
</feature>
<feature type="binding site" evidence="1">
    <location>
        <begin position="166"/>
        <end position="169"/>
    </location>
    <ligand>
        <name>NAD(+)</name>
        <dbReference type="ChEBI" id="CHEBI:57540"/>
    </ligand>
</feature>
<feature type="binding site" evidence="1">
    <location>
        <position position="181"/>
    </location>
    <ligand>
        <name>Zn(2+)</name>
        <dbReference type="ChEBI" id="CHEBI:29105"/>
    </ligand>
</feature>
<feature type="binding site" evidence="1">
    <location>
        <position position="242"/>
    </location>
    <ligand>
        <name>Zn(2+)</name>
        <dbReference type="ChEBI" id="CHEBI:29105"/>
    </ligand>
</feature>
<feature type="binding site" evidence="1">
    <location>
        <position position="259"/>
    </location>
    <ligand>
        <name>Zn(2+)</name>
        <dbReference type="ChEBI" id="CHEBI:29105"/>
    </ligand>
</feature>
<gene>
    <name evidence="1" type="primary">aroB</name>
    <name type="ordered locus">OB1784</name>
</gene>
<name>AROB_OCEIH</name>
<accession>Q8EQB7</accession>
<reference key="1">
    <citation type="journal article" date="2002" name="Nucleic Acids Res.">
        <title>Genome sequence of Oceanobacillus iheyensis isolated from the Iheya Ridge and its unexpected adaptive capabilities to extreme environments.</title>
        <authorList>
            <person name="Takami H."/>
            <person name="Takaki Y."/>
            <person name="Uchiyama I."/>
        </authorList>
    </citation>
    <scope>NUCLEOTIDE SEQUENCE [LARGE SCALE GENOMIC DNA]</scope>
    <source>
        <strain>DSM 14371 / CIP 107618 / JCM 11309 / KCTC 3954 / HTE831</strain>
    </source>
</reference>
<comment type="function">
    <text evidence="1">Catalyzes the conversion of 3-deoxy-D-arabino-heptulosonate 7-phosphate (DAHP) to dehydroquinate (DHQ).</text>
</comment>
<comment type="catalytic activity">
    <reaction evidence="1">
        <text>7-phospho-2-dehydro-3-deoxy-D-arabino-heptonate = 3-dehydroquinate + phosphate</text>
        <dbReference type="Rhea" id="RHEA:21968"/>
        <dbReference type="ChEBI" id="CHEBI:32364"/>
        <dbReference type="ChEBI" id="CHEBI:43474"/>
        <dbReference type="ChEBI" id="CHEBI:58394"/>
        <dbReference type="EC" id="4.2.3.4"/>
    </reaction>
</comment>
<comment type="cofactor">
    <cofactor evidence="1">
        <name>NAD(+)</name>
        <dbReference type="ChEBI" id="CHEBI:57540"/>
    </cofactor>
</comment>
<comment type="cofactor">
    <cofactor evidence="1">
        <name>Co(2+)</name>
        <dbReference type="ChEBI" id="CHEBI:48828"/>
    </cofactor>
    <cofactor evidence="1">
        <name>Zn(2+)</name>
        <dbReference type="ChEBI" id="CHEBI:29105"/>
    </cofactor>
    <text evidence="1">Binds 1 divalent metal cation per subunit. Can use either Co(2+) or Zn(2+).</text>
</comment>
<comment type="pathway">
    <text evidence="1">Metabolic intermediate biosynthesis; chorismate biosynthesis; chorismate from D-erythrose 4-phosphate and phosphoenolpyruvate: step 2/7.</text>
</comment>
<comment type="subcellular location">
    <subcellularLocation>
        <location evidence="1">Cytoplasm</location>
    </subcellularLocation>
</comment>
<comment type="similarity">
    <text evidence="1">Belongs to the sugar phosphate cyclases superfamily. Dehydroquinate synthase family.</text>
</comment>
<protein>
    <recommendedName>
        <fullName evidence="1">3-dehydroquinate synthase</fullName>
        <shortName evidence="1">DHQS</shortName>
        <ecNumber evidence="1">4.2.3.4</ecNumber>
    </recommendedName>
</protein>
<dbReference type="EC" id="4.2.3.4" evidence="1"/>
<dbReference type="EMBL" id="BA000028">
    <property type="protein sequence ID" value="BAC13740.1"/>
    <property type="molecule type" value="Genomic_DNA"/>
</dbReference>
<dbReference type="RefSeq" id="WP_011066183.1">
    <property type="nucleotide sequence ID" value="NC_004193.1"/>
</dbReference>
<dbReference type="SMR" id="Q8EQB7"/>
<dbReference type="STRING" id="221109.gene:10734024"/>
<dbReference type="KEGG" id="oih:OB1784"/>
<dbReference type="eggNOG" id="COG0337">
    <property type="taxonomic scope" value="Bacteria"/>
</dbReference>
<dbReference type="HOGENOM" id="CLU_001201_0_1_9"/>
<dbReference type="OrthoDB" id="9806583at2"/>
<dbReference type="PhylomeDB" id="Q8EQB7"/>
<dbReference type="UniPathway" id="UPA00053">
    <property type="reaction ID" value="UER00085"/>
</dbReference>
<dbReference type="Proteomes" id="UP000000822">
    <property type="component" value="Chromosome"/>
</dbReference>
<dbReference type="GO" id="GO:0005737">
    <property type="term" value="C:cytoplasm"/>
    <property type="evidence" value="ECO:0007669"/>
    <property type="project" value="UniProtKB-SubCell"/>
</dbReference>
<dbReference type="GO" id="GO:0003856">
    <property type="term" value="F:3-dehydroquinate synthase activity"/>
    <property type="evidence" value="ECO:0007669"/>
    <property type="project" value="UniProtKB-UniRule"/>
</dbReference>
<dbReference type="GO" id="GO:0046872">
    <property type="term" value="F:metal ion binding"/>
    <property type="evidence" value="ECO:0007669"/>
    <property type="project" value="UniProtKB-KW"/>
</dbReference>
<dbReference type="GO" id="GO:0000166">
    <property type="term" value="F:nucleotide binding"/>
    <property type="evidence" value="ECO:0007669"/>
    <property type="project" value="UniProtKB-KW"/>
</dbReference>
<dbReference type="GO" id="GO:0008652">
    <property type="term" value="P:amino acid biosynthetic process"/>
    <property type="evidence" value="ECO:0007669"/>
    <property type="project" value="UniProtKB-KW"/>
</dbReference>
<dbReference type="GO" id="GO:0009073">
    <property type="term" value="P:aromatic amino acid family biosynthetic process"/>
    <property type="evidence" value="ECO:0007669"/>
    <property type="project" value="UniProtKB-KW"/>
</dbReference>
<dbReference type="GO" id="GO:0009423">
    <property type="term" value="P:chorismate biosynthetic process"/>
    <property type="evidence" value="ECO:0007669"/>
    <property type="project" value="UniProtKB-UniRule"/>
</dbReference>
<dbReference type="CDD" id="cd08195">
    <property type="entry name" value="DHQS"/>
    <property type="match status" value="1"/>
</dbReference>
<dbReference type="FunFam" id="3.40.50.1970:FF:000007">
    <property type="entry name" value="Pentafunctional AROM polypeptide"/>
    <property type="match status" value="1"/>
</dbReference>
<dbReference type="Gene3D" id="3.40.50.1970">
    <property type="match status" value="1"/>
</dbReference>
<dbReference type="Gene3D" id="1.20.1090.10">
    <property type="entry name" value="Dehydroquinate synthase-like - alpha domain"/>
    <property type="match status" value="1"/>
</dbReference>
<dbReference type="HAMAP" id="MF_00110">
    <property type="entry name" value="DHQ_synthase"/>
    <property type="match status" value="1"/>
</dbReference>
<dbReference type="InterPro" id="IPR050071">
    <property type="entry name" value="Dehydroquinate_synthase"/>
</dbReference>
<dbReference type="InterPro" id="IPR016037">
    <property type="entry name" value="DHQ_synth_AroB"/>
</dbReference>
<dbReference type="InterPro" id="IPR030963">
    <property type="entry name" value="DHQ_synth_fam"/>
</dbReference>
<dbReference type="InterPro" id="IPR030960">
    <property type="entry name" value="DHQS/DOIS_N"/>
</dbReference>
<dbReference type="InterPro" id="IPR056179">
    <property type="entry name" value="DHQS_C"/>
</dbReference>
<dbReference type="NCBIfam" id="TIGR01357">
    <property type="entry name" value="aroB"/>
    <property type="match status" value="1"/>
</dbReference>
<dbReference type="PANTHER" id="PTHR43622">
    <property type="entry name" value="3-DEHYDROQUINATE SYNTHASE"/>
    <property type="match status" value="1"/>
</dbReference>
<dbReference type="PANTHER" id="PTHR43622:SF7">
    <property type="entry name" value="3-DEHYDROQUINATE SYNTHASE, CHLOROPLASTIC"/>
    <property type="match status" value="1"/>
</dbReference>
<dbReference type="Pfam" id="PF01761">
    <property type="entry name" value="DHQ_synthase"/>
    <property type="match status" value="1"/>
</dbReference>
<dbReference type="Pfam" id="PF24621">
    <property type="entry name" value="DHQS_C"/>
    <property type="match status" value="1"/>
</dbReference>
<dbReference type="PIRSF" id="PIRSF001455">
    <property type="entry name" value="DHQ_synth"/>
    <property type="match status" value="1"/>
</dbReference>
<dbReference type="SUPFAM" id="SSF56796">
    <property type="entry name" value="Dehydroquinate synthase-like"/>
    <property type="match status" value="1"/>
</dbReference>